<sequence>MIQLNEPLTHVRTKPILISLEFESPGRKTIDSVATESVLNSVVKINTFSSKPNICYPWQNKPQKKSKGSGFVIPGKMIITNAHVVANHILVLVIKRGSPKKYKAEVKAIGRECDLAILVIESKEFWEDMNPLELGDMPFLQESVNVIGYPTGGENISVTKGVVSRIESMDYAHGAINLPAIQTDAAMNPGNSGGPVCIGNKVVGVAFQTLGHSNNIGCLIPAPVVKHFITGVEKTGQYVGFCSLNLSYQHMDAQTRSHFKMNSEMTGILIYNINQHSDALNILKKYDVILSIDGVAIENDGTVIIPNRERTRLDDLVSLKQLGETILLKILREGKMHEFNITLRPVQRLVPAGQIDNNPSYYIFAGFVFVPLRKQHFKGSNGEQIVVISEVLADVINVEYYMYKHLKVNSVNKVKVENLKHLCELIEKCCTKDLRLELGDGRVIILDYQFAKSSTSLILERHRVPWAMSKDLMTDQSTTCSSTRLY</sequence>
<gene>
    <name type="primary">DEGP13</name>
    <name type="ordered locus">At5g40560</name>
    <name type="ORF">MNF13.8</name>
</gene>
<protein>
    <recommendedName>
        <fullName>Putative protease Do-like 13</fullName>
        <ecNumber>3.4.21.-</ecNumber>
    </recommendedName>
</protein>
<dbReference type="EC" id="3.4.21.-"/>
<dbReference type="EMBL" id="AB009052">
    <property type="protein sequence ID" value="BAB08526.1"/>
    <property type="molecule type" value="Genomic_DNA"/>
</dbReference>
<dbReference type="EMBL" id="CP002688">
    <property type="protein sequence ID" value="AED94564.2"/>
    <property type="molecule type" value="Genomic_DNA"/>
</dbReference>
<dbReference type="RefSeq" id="NP_001318714.1">
    <property type="nucleotide sequence ID" value="NM_001344343.1"/>
</dbReference>
<dbReference type="SMR" id="Q9FM41"/>
<dbReference type="STRING" id="3702.Q9FM41"/>
<dbReference type="MEROPS" id="S01.A06"/>
<dbReference type="PaxDb" id="3702-AT5G40560.1"/>
<dbReference type="EnsemblPlants" id="AT5G40560.1">
    <property type="protein sequence ID" value="AT5G40560.1"/>
    <property type="gene ID" value="AT5G40560"/>
</dbReference>
<dbReference type="GeneID" id="834054"/>
<dbReference type="Gramene" id="AT5G40560.1">
    <property type="protein sequence ID" value="AT5G40560.1"/>
    <property type="gene ID" value="AT5G40560"/>
</dbReference>
<dbReference type="KEGG" id="ath:AT5G40560"/>
<dbReference type="Araport" id="AT5G40560"/>
<dbReference type="TAIR" id="AT5G40560">
    <property type="gene designation" value="DEG13"/>
</dbReference>
<dbReference type="eggNOG" id="KOG1320">
    <property type="taxonomic scope" value="Eukaryota"/>
</dbReference>
<dbReference type="HOGENOM" id="CLU_020120_10_2_1"/>
<dbReference type="InParanoid" id="Q9FM41"/>
<dbReference type="OMA" id="KMHEFNI"/>
<dbReference type="PhylomeDB" id="Q9FM41"/>
<dbReference type="PRO" id="PR:Q9FM41"/>
<dbReference type="Proteomes" id="UP000006548">
    <property type="component" value="Chromosome 5"/>
</dbReference>
<dbReference type="ExpressionAtlas" id="Q9FM41">
    <property type="expression patterns" value="differential"/>
</dbReference>
<dbReference type="GO" id="GO:0004252">
    <property type="term" value="F:serine-type endopeptidase activity"/>
    <property type="evidence" value="ECO:0007669"/>
    <property type="project" value="InterPro"/>
</dbReference>
<dbReference type="GO" id="GO:0006508">
    <property type="term" value="P:proteolysis"/>
    <property type="evidence" value="ECO:0007669"/>
    <property type="project" value="UniProtKB-KW"/>
</dbReference>
<dbReference type="Gene3D" id="2.30.42.10">
    <property type="match status" value="1"/>
</dbReference>
<dbReference type="Gene3D" id="2.40.10.120">
    <property type="match status" value="1"/>
</dbReference>
<dbReference type="Gene3D" id="3.20.190.20">
    <property type="match status" value="1"/>
</dbReference>
<dbReference type="InterPro" id="IPR041517">
    <property type="entry name" value="DEGP_PDZ"/>
</dbReference>
<dbReference type="InterPro" id="IPR046449">
    <property type="entry name" value="DEGP_PDZ_sf"/>
</dbReference>
<dbReference type="InterPro" id="IPR001478">
    <property type="entry name" value="PDZ"/>
</dbReference>
<dbReference type="InterPro" id="IPR036034">
    <property type="entry name" value="PDZ_sf"/>
</dbReference>
<dbReference type="InterPro" id="IPR009003">
    <property type="entry name" value="Peptidase_S1_PA"/>
</dbReference>
<dbReference type="InterPro" id="IPR001940">
    <property type="entry name" value="Peptidase_S1C"/>
</dbReference>
<dbReference type="PANTHER" id="PTHR45980">
    <property type="match status" value="1"/>
</dbReference>
<dbReference type="PANTHER" id="PTHR45980:SF9">
    <property type="entry name" value="PROTEASE DO-LIKE 10, MITOCHONDRIAL-RELATED"/>
    <property type="match status" value="1"/>
</dbReference>
<dbReference type="Pfam" id="PF13180">
    <property type="entry name" value="PDZ_2"/>
    <property type="match status" value="1"/>
</dbReference>
<dbReference type="Pfam" id="PF17815">
    <property type="entry name" value="PDZ_3"/>
    <property type="match status" value="2"/>
</dbReference>
<dbReference type="Pfam" id="PF13365">
    <property type="entry name" value="Trypsin_2"/>
    <property type="match status" value="1"/>
</dbReference>
<dbReference type="PRINTS" id="PR00834">
    <property type="entry name" value="PROTEASES2C"/>
</dbReference>
<dbReference type="SUPFAM" id="SSF50156">
    <property type="entry name" value="PDZ domain-like"/>
    <property type="match status" value="1"/>
</dbReference>
<dbReference type="SUPFAM" id="SSF50494">
    <property type="entry name" value="Trypsin-like serine proteases"/>
    <property type="match status" value="1"/>
</dbReference>
<accession>Q9FM41</accession>
<accession>F4KHF0</accession>
<evidence type="ECO:0000255" key="1"/>
<evidence type="ECO:0000305" key="2"/>
<reference key="1">
    <citation type="journal article" date="1998" name="DNA Res.">
        <title>Structural analysis of Arabidopsis thaliana chromosome 5. IV. Sequence features of the regions of 1,456,315 bp covered by nineteen physically assigned P1 and TAC clones.</title>
        <authorList>
            <person name="Sato S."/>
            <person name="Kaneko T."/>
            <person name="Kotani H."/>
            <person name="Nakamura Y."/>
            <person name="Asamizu E."/>
            <person name="Miyajima N."/>
            <person name="Tabata S."/>
        </authorList>
    </citation>
    <scope>NUCLEOTIDE SEQUENCE [LARGE SCALE GENOMIC DNA]</scope>
    <source>
        <strain>cv. Columbia</strain>
    </source>
</reference>
<reference key="2">
    <citation type="journal article" date="2017" name="Plant J.">
        <title>Araport11: a complete reannotation of the Arabidopsis thaliana reference genome.</title>
        <authorList>
            <person name="Cheng C.Y."/>
            <person name="Krishnakumar V."/>
            <person name="Chan A.P."/>
            <person name="Thibaud-Nissen F."/>
            <person name="Schobel S."/>
            <person name="Town C.D."/>
        </authorList>
    </citation>
    <scope>GENOME REANNOTATION</scope>
    <source>
        <strain>cv. Columbia</strain>
    </source>
</reference>
<reference key="3">
    <citation type="journal article" date="2001" name="Plant Physiol.">
        <title>Chloroplast and mitochondrial proteases in Arabidopsis. A proposed nomenclature.</title>
        <authorList>
            <person name="Adam Z."/>
            <person name="Adamska I."/>
            <person name="Nakabayashi K."/>
            <person name="Ostersetzer O."/>
            <person name="Haussuhl K."/>
            <person name="Manuell A."/>
            <person name="Zheng B."/>
            <person name="Vallon O."/>
            <person name="Rodermel S.R."/>
            <person name="Shinozaki K."/>
            <person name="Clarke A.K."/>
        </authorList>
    </citation>
    <scope>GENE FAMILY</scope>
    <scope>NOMENCLATURE</scope>
</reference>
<organism>
    <name type="scientific">Arabidopsis thaliana</name>
    <name type="common">Mouse-ear cress</name>
    <dbReference type="NCBI Taxonomy" id="3702"/>
    <lineage>
        <taxon>Eukaryota</taxon>
        <taxon>Viridiplantae</taxon>
        <taxon>Streptophyta</taxon>
        <taxon>Embryophyta</taxon>
        <taxon>Tracheophyta</taxon>
        <taxon>Spermatophyta</taxon>
        <taxon>Magnoliopsida</taxon>
        <taxon>eudicotyledons</taxon>
        <taxon>Gunneridae</taxon>
        <taxon>Pentapetalae</taxon>
        <taxon>rosids</taxon>
        <taxon>malvids</taxon>
        <taxon>Brassicales</taxon>
        <taxon>Brassicaceae</taxon>
        <taxon>Camelineae</taxon>
        <taxon>Arabidopsis</taxon>
    </lineage>
</organism>
<keyword id="KW-0378">Hydrolase</keyword>
<keyword id="KW-0645">Protease</keyword>
<keyword id="KW-1185">Reference proteome</keyword>
<keyword id="KW-0720">Serine protease</keyword>
<proteinExistence type="inferred from homology"/>
<feature type="chain" id="PRO_0000093864" description="Putative protease Do-like 13">
    <location>
        <begin position="1"/>
        <end position="486"/>
    </location>
</feature>
<feature type="domain" description="PDZ">
    <location>
        <begin position="241"/>
        <end position="334"/>
    </location>
</feature>
<feature type="region of interest" description="Serine protease">
    <location>
        <begin position="44"/>
        <end position="229"/>
    </location>
</feature>
<feature type="active site" description="Charge relay system" evidence="1">
    <location>
        <position position="83"/>
    </location>
</feature>
<feature type="active site" description="Charge relay system" evidence="1">
    <location>
        <position position="114"/>
    </location>
</feature>
<feature type="active site" description="Charge relay system" evidence="1">
    <location>
        <position position="192"/>
    </location>
</feature>
<name>DGP13_ARATH</name>
<comment type="function">
    <text>Putative serine protease.</text>
</comment>
<comment type="similarity">
    <text evidence="2">Belongs to the peptidase S1C family.</text>
</comment>